<dbReference type="EC" id="2.3.1.109" evidence="1"/>
<dbReference type="EMBL" id="CP000950">
    <property type="protein sequence ID" value="ACA68509.1"/>
    <property type="molecule type" value="Genomic_DNA"/>
</dbReference>
<dbReference type="RefSeq" id="WP_012304138.1">
    <property type="nucleotide sequence ID" value="NZ_CP009792.1"/>
</dbReference>
<dbReference type="SMR" id="B1JMD2"/>
<dbReference type="KEGG" id="ypy:YPK_2228"/>
<dbReference type="PATRIC" id="fig|502800.11.peg.2904"/>
<dbReference type="UniPathway" id="UPA00185">
    <property type="reaction ID" value="UER00279"/>
</dbReference>
<dbReference type="GO" id="GO:0008791">
    <property type="term" value="F:arginine N-succinyltransferase activity"/>
    <property type="evidence" value="ECO:0007669"/>
    <property type="project" value="UniProtKB-UniRule"/>
</dbReference>
<dbReference type="GO" id="GO:0019544">
    <property type="term" value="P:arginine catabolic process to glutamate"/>
    <property type="evidence" value="ECO:0007669"/>
    <property type="project" value="UniProtKB-UniRule"/>
</dbReference>
<dbReference type="GO" id="GO:0019545">
    <property type="term" value="P:arginine catabolic process to succinate"/>
    <property type="evidence" value="ECO:0007669"/>
    <property type="project" value="UniProtKB-UniRule"/>
</dbReference>
<dbReference type="Gene3D" id="2.40.40.20">
    <property type="match status" value="1"/>
</dbReference>
<dbReference type="HAMAP" id="MF_01171">
    <property type="entry name" value="AstA"/>
    <property type="match status" value="1"/>
</dbReference>
<dbReference type="InterPro" id="IPR016181">
    <property type="entry name" value="Acyl_CoA_acyltransferase"/>
</dbReference>
<dbReference type="InterPro" id="IPR007041">
    <property type="entry name" value="Arg_succinylTrfase_AstA/AruG"/>
</dbReference>
<dbReference type="InterPro" id="IPR017650">
    <property type="entry name" value="Arginine_N-succinylTrfase"/>
</dbReference>
<dbReference type="NCBIfam" id="TIGR03243">
    <property type="entry name" value="arg_catab_AOST"/>
    <property type="match status" value="1"/>
</dbReference>
<dbReference type="NCBIfam" id="TIGR03244">
    <property type="entry name" value="arg_catab_AstA"/>
    <property type="match status" value="1"/>
</dbReference>
<dbReference type="NCBIfam" id="NF007770">
    <property type="entry name" value="PRK10456.1"/>
    <property type="match status" value="1"/>
</dbReference>
<dbReference type="PANTHER" id="PTHR30420:SF1">
    <property type="entry name" value="ARGININE N-SUCCINYLTRANSFERASE"/>
    <property type="match status" value="1"/>
</dbReference>
<dbReference type="PANTHER" id="PTHR30420">
    <property type="entry name" value="N-SUCCINYLARGININE DIHYDROLASE"/>
    <property type="match status" value="1"/>
</dbReference>
<dbReference type="Pfam" id="PF04958">
    <property type="entry name" value="AstA"/>
    <property type="match status" value="1"/>
</dbReference>
<dbReference type="SUPFAM" id="SSF55729">
    <property type="entry name" value="Acyl-CoA N-acyltransferases (Nat)"/>
    <property type="match status" value="1"/>
</dbReference>
<comment type="function">
    <text evidence="1">Catalyzes the transfer of succinyl-CoA to arginine to produce N(2)-succinylarginine.</text>
</comment>
<comment type="catalytic activity">
    <reaction evidence="1">
        <text>succinyl-CoA + L-arginine = N(2)-succinyl-L-arginine + CoA + H(+)</text>
        <dbReference type="Rhea" id="RHEA:15185"/>
        <dbReference type="ChEBI" id="CHEBI:15378"/>
        <dbReference type="ChEBI" id="CHEBI:32682"/>
        <dbReference type="ChEBI" id="CHEBI:57287"/>
        <dbReference type="ChEBI" id="CHEBI:57292"/>
        <dbReference type="ChEBI" id="CHEBI:58241"/>
        <dbReference type="EC" id="2.3.1.109"/>
    </reaction>
</comment>
<comment type="pathway">
    <text evidence="1">Amino-acid degradation; L-arginine degradation via AST pathway; L-glutamate and succinate from L-arginine: step 1/5.</text>
</comment>
<comment type="similarity">
    <text evidence="1">Belongs to the arginine N-succinyltransferase family.</text>
</comment>
<gene>
    <name evidence="1" type="primary">astA</name>
    <name type="ordered locus">YPK_2228</name>
</gene>
<keyword id="KW-0012">Acyltransferase</keyword>
<keyword id="KW-0056">Arginine metabolism</keyword>
<keyword id="KW-0808">Transferase</keyword>
<proteinExistence type="inferred from homology"/>
<sequence length="350" mass="39470">MMKVRPVERRDLADIFELAGKTGVGMTSLPQNEQHLAARIERALNTWQGSLDPGEQGYLFVLEDSEQQKVVGVSAIEVAVGLNDPWYNFRVGTLVHASKALNVYKSVPTLFLSNDHTGYSELCTLFLDPDYRKDKNGPFLSKVRFLFIAAFRQYFSRKVIAEMRGYTDEQGRSPFWESVGRHFFSIEFAKADYLSGTGQKAFIAELMPKHPLYVDFLAEEARAVIGQVHPHTTPARAVLETEGLQYQGYVDIFDGGPTLEANTDDVRAVRDSSKRTVVIKDYDIEDYDIDPNGRLYLVANDHYHHFRAILMNTHLSDERLRLTPESAEALGVAAGDSVRIVSLFAPETKR</sequence>
<organism>
    <name type="scientific">Yersinia pseudotuberculosis serotype O:3 (strain YPIII)</name>
    <dbReference type="NCBI Taxonomy" id="502800"/>
    <lineage>
        <taxon>Bacteria</taxon>
        <taxon>Pseudomonadati</taxon>
        <taxon>Pseudomonadota</taxon>
        <taxon>Gammaproteobacteria</taxon>
        <taxon>Enterobacterales</taxon>
        <taxon>Yersiniaceae</taxon>
        <taxon>Yersinia</taxon>
    </lineage>
</organism>
<accession>B1JMD2</accession>
<protein>
    <recommendedName>
        <fullName evidence="1">Arginine N-succinyltransferase</fullName>
        <shortName evidence="1">AST</shortName>
        <ecNumber evidence="1">2.3.1.109</ecNumber>
    </recommendedName>
    <alternativeName>
        <fullName evidence="1">AOST</fullName>
    </alternativeName>
</protein>
<feature type="chain" id="PRO_1000137994" description="Arginine N-succinyltransferase">
    <location>
        <begin position="1"/>
        <end position="350"/>
    </location>
</feature>
<feature type="active site" description="Proton donor" evidence="1">
    <location>
        <position position="229"/>
    </location>
</feature>
<feature type="binding site" evidence="1">
    <location>
        <position position="125"/>
    </location>
    <ligand>
        <name>succinyl-CoA</name>
        <dbReference type="ChEBI" id="CHEBI:57292"/>
    </ligand>
</feature>
<name>ASTA_YERPY</name>
<evidence type="ECO:0000255" key="1">
    <source>
        <dbReference type="HAMAP-Rule" id="MF_01171"/>
    </source>
</evidence>
<reference key="1">
    <citation type="submission" date="2008-02" db="EMBL/GenBank/DDBJ databases">
        <title>Complete sequence of Yersinia pseudotuberculosis YPIII.</title>
        <authorList>
            <consortium name="US DOE Joint Genome Institute"/>
            <person name="Copeland A."/>
            <person name="Lucas S."/>
            <person name="Lapidus A."/>
            <person name="Glavina del Rio T."/>
            <person name="Dalin E."/>
            <person name="Tice H."/>
            <person name="Bruce D."/>
            <person name="Goodwin L."/>
            <person name="Pitluck S."/>
            <person name="Munk A.C."/>
            <person name="Brettin T."/>
            <person name="Detter J.C."/>
            <person name="Han C."/>
            <person name="Tapia R."/>
            <person name="Schmutz J."/>
            <person name="Larimer F."/>
            <person name="Land M."/>
            <person name="Hauser L."/>
            <person name="Challacombe J.F."/>
            <person name="Green L."/>
            <person name="Lindler L.E."/>
            <person name="Nikolich M.P."/>
            <person name="Richardson P."/>
        </authorList>
    </citation>
    <scope>NUCLEOTIDE SEQUENCE [LARGE SCALE GENOMIC DNA]</scope>
    <source>
        <strain>YPIII</strain>
    </source>
</reference>